<keyword id="KW-0256">Endoplasmic reticulum</keyword>
<keyword id="KW-0931">ER-Golgi transport</keyword>
<keyword id="KW-0325">Glycoprotein</keyword>
<keyword id="KW-0333">Golgi apparatus</keyword>
<keyword id="KW-0343">GTPase activation</keyword>
<keyword id="KW-0472">Membrane</keyword>
<keyword id="KW-0653">Protein transport</keyword>
<keyword id="KW-1185">Reference proteome</keyword>
<keyword id="KW-0677">Repeat</keyword>
<keyword id="KW-0735">Signal-anchor</keyword>
<keyword id="KW-0812">Transmembrane</keyword>
<keyword id="KW-1133">Transmembrane helix</keyword>
<keyword id="KW-0813">Transport</keyword>
<keyword id="KW-0853">WD repeat</keyword>
<accession>Q6FIY2</accession>
<feature type="chain" id="PRO_0000295526" description="Guanine nucleotide-exchange factor SEC12">
    <location>
        <begin position="1"/>
        <end position="459"/>
    </location>
</feature>
<feature type="topological domain" description="Cytoplasmic" evidence="1">
    <location>
        <begin position="1"/>
        <end position="351"/>
    </location>
</feature>
<feature type="transmembrane region" description="Helical; Signal-anchor for type II membrane protein" evidence="1">
    <location>
        <begin position="352"/>
        <end position="370"/>
    </location>
</feature>
<feature type="topological domain" description="Lumenal" evidence="1">
    <location>
        <begin position="371"/>
        <end position="459"/>
    </location>
</feature>
<feature type="repeat" description="WD 1">
    <location>
        <begin position="256"/>
        <end position="291"/>
    </location>
</feature>
<feature type="repeat" description="WD 2">
    <location>
        <begin position="294"/>
        <end position="334"/>
    </location>
</feature>
<feature type="region of interest" description="Disordered" evidence="3">
    <location>
        <begin position="417"/>
        <end position="459"/>
    </location>
</feature>
<feature type="compositionally biased region" description="Low complexity" evidence="3">
    <location>
        <begin position="422"/>
        <end position="435"/>
    </location>
</feature>
<feature type="compositionally biased region" description="Basic and acidic residues" evidence="3">
    <location>
        <begin position="436"/>
        <end position="452"/>
    </location>
</feature>
<feature type="glycosylation site" description="N-linked (GlcNAc...) asparagine" evidence="2">
    <location>
        <position position="435"/>
    </location>
</feature>
<name>SEC12_CANGA</name>
<gene>
    <name type="primary">SEC12</name>
    <name type="ordered locus">CAGL0M10703g</name>
</gene>
<reference key="1">
    <citation type="journal article" date="2004" name="Nature">
        <title>Genome evolution in yeasts.</title>
        <authorList>
            <person name="Dujon B."/>
            <person name="Sherman D."/>
            <person name="Fischer G."/>
            <person name="Durrens P."/>
            <person name="Casaregola S."/>
            <person name="Lafontaine I."/>
            <person name="de Montigny J."/>
            <person name="Marck C."/>
            <person name="Neuveglise C."/>
            <person name="Talla E."/>
            <person name="Goffard N."/>
            <person name="Frangeul L."/>
            <person name="Aigle M."/>
            <person name="Anthouard V."/>
            <person name="Babour A."/>
            <person name="Barbe V."/>
            <person name="Barnay S."/>
            <person name="Blanchin S."/>
            <person name="Beckerich J.-M."/>
            <person name="Beyne E."/>
            <person name="Bleykasten C."/>
            <person name="Boisrame A."/>
            <person name="Boyer J."/>
            <person name="Cattolico L."/>
            <person name="Confanioleri F."/>
            <person name="de Daruvar A."/>
            <person name="Despons L."/>
            <person name="Fabre E."/>
            <person name="Fairhead C."/>
            <person name="Ferry-Dumazet H."/>
            <person name="Groppi A."/>
            <person name="Hantraye F."/>
            <person name="Hennequin C."/>
            <person name="Jauniaux N."/>
            <person name="Joyet P."/>
            <person name="Kachouri R."/>
            <person name="Kerrest A."/>
            <person name="Koszul R."/>
            <person name="Lemaire M."/>
            <person name="Lesur I."/>
            <person name="Ma L."/>
            <person name="Muller H."/>
            <person name="Nicaud J.-M."/>
            <person name="Nikolski M."/>
            <person name="Oztas S."/>
            <person name="Ozier-Kalogeropoulos O."/>
            <person name="Pellenz S."/>
            <person name="Potier S."/>
            <person name="Richard G.-F."/>
            <person name="Straub M.-L."/>
            <person name="Suleau A."/>
            <person name="Swennen D."/>
            <person name="Tekaia F."/>
            <person name="Wesolowski-Louvel M."/>
            <person name="Westhof E."/>
            <person name="Wirth B."/>
            <person name="Zeniou-Meyer M."/>
            <person name="Zivanovic Y."/>
            <person name="Bolotin-Fukuhara M."/>
            <person name="Thierry A."/>
            <person name="Bouchier C."/>
            <person name="Caudron B."/>
            <person name="Scarpelli C."/>
            <person name="Gaillardin C."/>
            <person name="Weissenbach J."/>
            <person name="Wincker P."/>
            <person name="Souciet J.-L."/>
        </authorList>
    </citation>
    <scope>NUCLEOTIDE SEQUENCE [LARGE SCALE GENOMIC DNA]</scope>
    <source>
        <strain>ATCC 2001 / BCRC 20586 / JCM 3761 / NBRC 0622 / NRRL Y-65 / CBS 138</strain>
    </source>
</reference>
<proteinExistence type="inferred from homology"/>
<protein>
    <recommendedName>
        <fullName>Guanine nucleotide-exchange factor SEC12</fullName>
    </recommendedName>
    <alternativeName>
        <fullName>Protein transport protein SEC12</fullName>
    </alternativeName>
</protein>
<comment type="function">
    <text evidence="1">Guanine nucleotide-exchange factor (GEF) required for the formation or budding of transport vesicles from the ER. This function involves the cytoplasmic domain of the protein, which is thought to interact with the small GTP-binding protein SAR1. Required for autophagy (By similarity).</text>
</comment>
<comment type="subcellular location">
    <subcellularLocation>
        <location evidence="1">Endoplasmic reticulum membrane</location>
        <topology evidence="1">Single-pass type II membrane protein</topology>
    </subcellularLocation>
    <subcellularLocation>
        <location evidence="1">Golgi apparatus</location>
        <location evidence="1">cis-Golgi network membrane</location>
        <topology evidence="1">Single-pass type II membrane protein</topology>
    </subcellularLocation>
</comment>
<comment type="similarity">
    <text evidence="4">Belongs to the WD repeat SEC12 family.</text>
</comment>
<sequence>MKFHTKLYKVGYPLYGAKFVCDDQFVVTGGGGEGNNGVDNKLTVLKVGSSEGNGLRVDEVCDATLPANDDSPTALDAVGDTILIGCNENSAKVKSGAGNSHVRKFRYDGKSLKFESAADIDKSTNPEDYTKVIRLSKDGSEAAIASSKNPPSMAIIDPRNYSVKYEIETGRDVKDLHFSPNGKLIGYITESSLEIISTVTGSCVVRKTDFDRKIILSKMKFLDDNNVLIAATWASSKGILLTKISIKSGKTTVFWSRQISSKFKGITAMDVNDQMNLVMLATNDNSVLLVKLRNLSVGKTFTQVHGFAITRVIFSPDSRYAVSISAAETVHVIEIPSDFADSRSLSESTTQWLMNTIMVLFLAFVLNSMYKEDMHKNVLNYFRSVKSIDSSSILSMEDMEQVTLVGTISTSVRSTTQRFESSKSVSSTSVVARTNVSEKERSQQDPVKKSPEQHQQNQQ</sequence>
<dbReference type="EMBL" id="CR380959">
    <property type="protein sequence ID" value="CAG62790.1"/>
    <property type="molecule type" value="Genomic_DNA"/>
</dbReference>
<dbReference type="RefSeq" id="XP_449812.1">
    <property type="nucleotide sequence ID" value="XM_449812.1"/>
</dbReference>
<dbReference type="SMR" id="Q6FIY2"/>
<dbReference type="FunCoup" id="Q6FIY2">
    <property type="interactions" value="197"/>
</dbReference>
<dbReference type="STRING" id="284593.Q6FIY2"/>
<dbReference type="GlyCosmos" id="Q6FIY2">
    <property type="glycosylation" value="1 site, No reported glycans"/>
</dbReference>
<dbReference type="EnsemblFungi" id="CAGL0M10703g-T">
    <property type="protein sequence ID" value="CAGL0M10703g-T-p1"/>
    <property type="gene ID" value="CAGL0M10703g"/>
</dbReference>
<dbReference type="KEGG" id="cgr:2891377"/>
<dbReference type="CGD" id="CAL0137173">
    <property type="gene designation" value="CAGL0M10703g"/>
</dbReference>
<dbReference type="VEuPathDB" id="FungiDB:CAGL0M10703g"/>
<dbReference type="eggNOG" id="KOG0771">
    <property type="taxonomic scope" value="Eukaryota"/>
</dbReference>
<dbReference type="HOGENOM" id="CLU_033006_0_0_1"/>
<dbReference type="InParanoid" id="Q6FIY2"/>
<dbReference type="OMA" id="RVEIYDW"/>
<dbReference type="Proteomes" id="UP000002428">
    <property type="component" value="Chromosome M"/>
</dbReference>
<dbReference type="GO" id="GO:0005789">
    <property type="term" value="C:endoplasmic reticulum membrane"/>
    <property type="evidence" value="ECO:0007669"/>
    <property type="project" value="UniProtKB-SubCell"/>
</dbReference>
<dbReference type="GO" id="GO:0005794">
    <property type="term" value="C:Golgi apparatus"/>
    <property type="evidence" value="ECO:0007669"/>
    <property type="project" value="UniProtKB-SubCell"/>
</dbReference>
<dbReference type="GO" id="GO:0005096">
    <property type="term" value="F:GTPase activator activity"/>
    <property type="evidence" value="ECO:0007669"/>
    <property type="project" value="UniProtKB-KW"/>
</dbReference>
<dbReference type="GO" id="GO:0005085">
    <property type="term" value="F:guanyl-nucleotide exchange factor activity"/>
    <property type="evidence" value="ECO:0007669"/>
    <property type="project" value="InterPro"/>
</dbReference>
<dbReference type="GO" id="GO:0006888">
    <property type="term" value="P:endoplasmic reticulum to Golgi vesicle-mediated transport"/>
    <property type="evidence" value="ECO:0007669"/>
    <property type="project" value="TreeGrafter"/>
</dbReference>
<dbReference type="GO" id="GO:0015031">
    <property type="term" value="P:protein transport"/>
    <property type="evidence" value="ECO:0007669"/>
    <property type="project" value="UniProtKB-KW"/>
</dbReference>
<dbReference type="GO" id="GO:0003400">
    <property type="term" value="P:regulation of COPII vesicle coating"/>
    <property type="evidence" value="ECO:0007669"/>
    <property type="project" value="TreeGrafter"/>
</dbReference>
<dbReference type="Gene3D" id="2.130.10.10">
    <property type="entry name" value="YVTN repeat-like/Quinoprotein amine dehydrogenase"/>
    <property type="match status" value="1"/>
</dbReference>
<dbReference type="InterPro" id="IPR045260">
    <property type="entry name" value="Sec12-like"/>
</dbReference>
<dbReference type="InterPro" id="IPR015943">
    <property type="entry name" value="WD40/YVTN_repeat-like_dom_sf"/>
</dbReference>
<dbReference type="PANTHER" id="PTHR23284">
    <property type="entry name" value="PROLACTIN REGULATORY ELEMENT BINDING PROTEIN"/>
    <property type="match status" value="1"/>
</dbReference>
<dbReference type="PANTHER" id="PTHR23284:SF0">
    <property type="entry name" value="PROLACTIN REGULATORY ELEMENT-BINDING PROTEIN"/>
    <property type="match status" value="1"/>
</dbReference>
<dbReference type="SUPFAM" id="SSF69322">
    <property type="entry name" value="Tricorn protease domain 2"/>
    <property type="match status" value="1"/>
</dbReference>
<organism>
    <name type="scientific">Candida glabrata (strain ATCC 2001 / BCRC 20586 / JCM 3761 / NBRC 0622 / NRRL Y-65 / CBS 138)</name>
    <name type="common">Yeast</name>
    <name type="synonym">Nakaseomyces glabratus</name>
    <dbReference type="NCBI Taxonomy" id="284593"/>
    <lineage>
        <taxon>Eukaryota</taxon>
        <taxon>Fungi</taxon>
        <taxon>Dikarya</taxon>
        <taxon>Ascomycota</taxon>
        <taxon>Saccharomycotina</taxon>
        <taxon>Saccharomycetes</taxon>
        <taxon>Saccharomycetales</taxon>
        <taxon>Saccharomycetaceae</taxon>
        <taxon>Nakaseomyces</taxon>
    </lineage>
</organism>
<evidence type="ECO:0000250" key="1"/>
<evidence type="ECO:0000255" key="2"/>
<evidence type="ECO:0000256" key="3">
    <source>
        <dbReference type="SAM" id="MobiDB-lite"/>
    </source>
</evidence>
<evidence type="ECO:0000305" key="4"/>